<proteinExistence type="inferred from homology"/>
<evidence type="ECO:0000250" key="1">
    <source>
        <dbReference type="UniProtKB" id="P0DQT5"/>
    </source>
</evidence>
<evidence type="ECO:0000255" key="2"/>
<evidence type="ECO:0000269" key="3">
    <source>
    </source>
</evidence>
<evidence type="ECO:0000303" key="4">
    <source>
    </source>
</evidence>
<evidence type="ECO:0000305" key="5"/>
<evidence type="ECO:0000305" key="6">
    <source>
    </source>
</evidence>
<evidence type="ECO:0000312" key="7">
    <source>
        <dbReference type="EMBL" id="AMP44598.1"/>
    </source>
</evidence>
<dbReference type="EMBL" id="KU317638">
    <property type="protein sequence ID" value="AMP44598.1"/>
    <property type="molecule type" value="mRNA"/>
</dbReference>
<dbReference type="GO" id="GO:0005576">
    <property type="term" value="C:extracellular region"/>
    <property type="evidence" value="ECO:0007669"/>
    <property type="project" value="UniProtKB-SubCell"/>
</dbReference>
<dbReference type="GO" id="GO:0090729">
    <property type="term" value="F:toxin activity"/>
    <property type="evidence" value="ECO:0007669"/>
    <property type="project" value="UniProtKB-KW"/>
</dbReference>
<sequence>MEMAYWVMVMMMVWITAPLSEGGKLNDVIRALAPDDVTPQFILRSLISRRRSDSDVREVPVCSWKICPP</sequence>
<reference evidence="7" key="1">
    <citation type="submission" date="2015-12" db="EMBL/GenBank/DDBJ databases">
        <title>High throughput identification of novel conotoxins from the Chinese tubular cone snail Conus betulinus by multitranscriptome sequencing.</title>
        <authorList>
            <person name="Ruan Z."/>
            <person name="Peng C."/>
            <person name="Shi Q."/>
            <person name="Yao G."/>
            <person name="Gao B.-M."/>
        </authorList>
    </citation>
    <scope>NUCLEOTIDE SEQUENCE [MRNA]</scope>
</reference>
<reference key="2">
    <citation type="journal article" date="2022" name="Mol. Biol. Evol.">
        <title>Reconstructing the origins of the somatostatin and allatostatin-C signaling systems using the accelerated evolution of biodiverse cone snail venoms.</title>
        <authorList>
            <person name="Koch T.L."/>
            <person name="Ramiro I.B.L."/>
            <person name="Florez-Salcedo P."/>
            <person name="Engholm E."/>
            <person name="Jensen K.J."/>
            <person name="Chase K."/>
            <person name="Olivera B.M."/>
            <person name="Bjoern-Yoshimoto W.E."/>
            <person name="Safavi-Hemami H."/>
        </authorList>
    </citation>
    <scope>NUCLEOTIDE SEQUENCE [MRNA]</scope>
    <source>
        <tissue>Venom duct</tissue>
    </source>
</reference>
<accession>A0A142C197</accession>
<feature type="signal peptide" evidence="2">
    <location>
        <begin position="1"/>
        <end position="22"/>
    </location>
</feature>
<feature type="propeptide" id="PRO_0000456120" evidence="6">
    <location>
        <begin position="23"/>
        <end position="57"/>
    </location>
</feature>
<feature type="peptide" id="PRO_5007493520" description="Consomatin Be1">
    <location>
        <begin position="58"/>
        <end position="69"/>
    </location>
</feature>
<feature type="modified residue" description="4-carboxyglutamate" evidence="1">
    <location>
        <position position="58"/>
    </location>
</feature>
<feature type="modified residue" description="D-tryptophan" evidence="1">
    <location>
        <position position="64"/>
    </location>
</feature>
<feature type="modified residue" description="4-hydroxyproline" evidence="5">
    <location>
        <position position="68"/>
    </location>
</feature>
<feature type="modified residue" description="4-hydroxyproline" evidence="1">
    <location>
        <position position="69"/>
    </location>
</feature>
<feature type="disulfide bond" evidence="1">
    <location>
        <begin position="62"/>
        <end position="67"/>
    </location>
</feature>
<name>CSST1_CONBE</name>
<keyword id="KW-0208">D-amino acid</keyword>
<keyword id="KW-1015">Disulfide bond</keyword>
<keyword id="KW-1213">G-protein coupled receptor impairing toxin</keyword>
<keyword id="KW-0301">Gamma-carboxyglutamic acid</keyword>
<keyword id="KW-0379">Hydroxylation</keyword>
<keyword id="KW-0964">Secreted</keyword>
<keyword id="KW-0732">Signal</keyword>
<keyword id="KW-0800">Toxin</keyword>
<protein>
    <recommendedName>
        <fullName evidence="4">Consomatin Be1</fullName>
        <shortName evidence="5">ConSST Be1</shortName>
    </recommendedName>
    <alternativeName>
        <fullName evidence="4">Somatostatin-related peptide</fullName>
        <shortName evidence="4">SSRP</shortName>
    </alternativeName>
</protein>
<comment type="function">
    <text evidence="1">Moderately activates human somatostatin receptors (SSTR) with a preferential activation of SSTR1 and SSTR4. In vivo, does not cause behavioral changes in mice within a few minutes of intracranial injection, but causes a progressive loss of movement thereafter. Four to five hours after injection, mice recover, even with the highest dose tested. Shows antinociception and antihyperalgesia activities in two mouse models of acute pain, most probably by acting outside the central nervous system.</text>
</comment>
<comment type="subcellular location">
    <subcellularLocation>
        <location evidence="6">Secreted</location>
    </subcellularLocation>
</comment>
<comment type="tissue specificity">
    <text evidence="6">Expressed by the venom duct.</text>
</comment>
<comment type="domain">
    <text evidence="5">The cysteine framework is C-C.</text>
</comment>
<comment type="miscellaneous">
    <text evidence="1">This peptide is an evolutionarily optimized stable analog of somatostatin. In addition, it adopts nearly identical conformations as in the somatostatin drug analog Octreotide. As this drug, it contains a D-Trp at the same position, whose synthesis is a common strategy used for enhancing the metabolic stability of compounds in drug design.</text>
</comment>
<comment type="miscellaneous">
    <text evidence="3">Consomatins evolved by gene duplication of a 'Somatostatin and related peptides (SSRP)' gene expressed in the snail neuroendocrine system.</text>
</comment>
<comment type="miscellaneous">
    <text evidence="1">Negative results: does not activate any of the other 313 GPCRs tested. Shows little or no activating activity at the SSTR2, SSTR3 and SSTR5.</text>
</comment>
<comment type="similarity">
    <text evidence="5">Belongs to the conotoxin C superfamily. Consomatin family.</text>
</comment>
<organism>
    <name type="scientific">Conus betulinus</name>
    <name type="common">Beech cone</name>
    <dbReference type="NCBI Taxonomy" id="89764"/>
    <lineage>
        <taxon>Eukaryota</taxon>
        <taxon>Metazoa</taxon>
        <taxon>Spiralia</taxon>
        <taxon>Lophotrochozoa</taxon>
        <taxon>Mollusca</taxon>
        <taxon>Gastropoda</taxon>
        <taxon>Caenogastropoda</taxon>
        <taxon>Neogastropoda</taxon>
        <taxon>Conoidea</taxon>
        <taxon>Conidae</taxon>
        <taxon>Conus</taxon>
        <taxon>Dendroconus</taxon>
    </lineage>
</organism>